<dbReference type="EMBL" id="AE000782">
    <property type="protein sequence ID" value="AAB89242.1"/>
    <property type="molecule type" value="Genomic_DNA"/>
</dbReference>
<dbReference type="PIR" id="E69502">
    <property type="entry name" value="E69502"/>
</dbReference>
<dbReference type="RefSeq" id="WP_010879514.1">
    <property type="nucleotide sequence ID" value="NC_000917.1"/>
</dbReference>
<dbReference type="SMR" id="O28257"/>
<dbReference type="STRING" id="224325.AF_2022"/>
<dbReference type="PaxDb" id="224325-AF_2022"/>
<dbReference type="EnsemblBacteria" id="AAB89242">
    <property type="protein sequence ID" value="AAB89242"/>
    <property type="gene ID" value="AF_2022"/>
</dbReference>
<dbReference type="KEGG" id="afu:AF_2022"/>
<dbReference type="eggNOG" id="arCOG10232">
    <property type="taxonomic scope" value="Archaea"/>
</dbReference>
<dbReference type="HOGENOM" id="CLU_1567053_0_0_2"/>
<dbReference type="OrthoDB" id="50318at2157"/>
<dbReference type="Proteomes" id="UP000002199">
    <property type="component" value="Chromosome"/>
</dbReference>
<gene>
    <name type="ordered locus">AF_2022</name>
</gene>
<reference key="1">
    <citation type="journal article" date="1997" name="Nature">
        <title>The complete genome sequence of the hyperthermophilic, sulphate-reducing archaeon Archaeoglobus fulgidus.</title>
        <authorList>
            <person name="Klenk H.-P."/>
            <person name="Clayton R.A."/>
            <person name="Tomb J.-F."/>
            <person name="White O."/>
            <person name="Nelson K.E."/>
            <person name="Ketchum K.A."/>
            <person name="Dodson R.J."/>
            <person name="Gwinn M.L."/>
            <person name="Hickey E.K."/>
            <person name="Peterson J.D."/>
            <person name="Richardson D.L."/>
            <person name="Kerlavage A.R."/>
            <person name="Graham D.E."/>
            <person name="Kyrpides N.C."/>
            <person name="Fleischmann R.D."/>
            <person name="Quackenbush J."/>
            <person name="Lee N.H."/>
            <person name="Sutton G.G."/>
            <person name="Gill S.R."/>
            <person name="Kirkness E.F."/>
            <person name="Dougherty B.A."/>
            <person name="McKenney K."/>
            <person name="Adams M.D."/>
            <person name="Loftus B.J."/>
            <person name="Peterson S.N."/>
            <person name="Reich C.I."/>
            <person name="McNeil L.K."/>
            <person name="Badger J.H."/>
            <person name="Glodek A."/>
            <person name="Zhou L."/>
            <person name="Overbeek R."/>
            <person name="Gocayne J.D."/>
            <person name="Weidman J.F."/>
            <person name="McDonald L.A."/>
            <person name="Utterback T.R."/>
            <person name="Cotton M.D."/>
            <person name="Spriggs T."/>
            <person name="Artiach P."/>
            <person name="Kaine B.P."/>
            <person name="Sykes S.M."/>
            <person name="Sadow P.W."/>
            <person name="D'Andrea K.P."/>
            <person name="Bowman C."/>
            <person name="Fujii C."/>
            <person name="Garland S.A."/>
            <person name="Mason T.M."/>
            <person name="Olsen G.J."/>
            <person name="Fraser C.M."/>
            <person name="Smith H.O."/>
            <person name="Woese C.R."/>
            <person name="Venter J.C."/>
        </authorList>
    </citation>
    <scope>NUCLEOTIDE SEQUENCE [LARGE SCALE GENOMIC DNA]</scope>
    <source>
        <strain>ATCC 49558 / DSM 4304 / JCM 9628 / NBRC 100126 / VC-16</strain>
    </source>
</reference>
<accession>O28257</accession>
<organism>
    <name type="scientific">Archaeoglobus fulgidus (strain ATCC 49558 / DSM 4304 / JCM 9628 / NBRC 100126 / VC-16)</name>
    <dbReference type="NCBI Taxonomy" id="224325"/>
    <lineage>
        <taxon>Archaea</taxon>
        <taxon>Methanobacteriati</taxon>
        <taxon>Methanobacteriota</taxon>
        <taxon>Archaeoglobi</taxon>
        <taxon>Archaeoglobales</taxon>
        <taxon>Archaeoglobaceae</taxon>
        <taxon>Archaeoglobus</taxon>
    </lineage>
</organism>
<keyword id="KW-1185">Reference proteome</keyword>
<name>Y2022_ARCFU</name>
<protein>
    <recommendedName>
        <fullName>Uncharacterized protein AF_2022</fullName>
    </recommendedName>
</protein>
<proteinExistence type="predicted"/>
<feature type="chain" id="PRO_0000128084" description="Uncharacterized protein AF_2022">
    <location>
        <begin position="1"/>
        <end position="175"/>
    </location>
</feature>
<sequence>MKITVEIPPDMEKLLVKKCEESGVSPSEFVYLLLEWYFFKRGKKAETTGELNEFLRVAKEVADERVRFCKFSDGAYCAIETFEDVFSDKEPTPISPYRCLFCLYYVDKRKDKRRTEFRELTEAKMYDLAKIAAKFVVELYGDRLGYRPKTKSEEIVEKQEKKDEKLPKVKKLLDW</sequence>